<accession>Q72B14</accession>
<keyword id="KW-0378">Hydrolase</keyword>
<keyword id="KW-0479">Metal-binding</keyword>
<keyword id="KW-1185">Reference proteome</keyword>
<keyword id="KW-0862">Zinc</keyword>
<dbReference type="EC" id="3.5.4.28" evidence="1"/>
<dbReference type="EC" id="3.5.4.31" evidence="1"/>
<dbReference type="EMBL" id="AE017285">
    <property type="protein sequence ID" value="AAS96302.1"/>
    <property type="molecule type" value="Genomic_DNA"/>
</dbReference>
<dbReference type="RefSeq" id="WP_010939112.1">
    <property type="nucleotide sequence ID" value="NC_002937.3"/>
</dbReference>
<dbReference type="RefSeq" id="YP_011043.1">
    <property type="nucleotide sequence ID" value="NC_002937.3"/>
</dbReference>
<dbReference type="SMR" id="Q72B14"/>
<dbReference type="STRING" id="882.DVU_1825"/>
<dbReference type="MEROPS" id="M38.981"/>
<dbReference type="PaxDb" id="882-DVU_1825"/>
<dbReference type="EnsemblBacteria" id="AAS96302">
    <property type="protein sequence ID" value="AAS96302"/>
    <property type="gene ID" value="DVU_1825"/>
</dbReference>
<dbReference type="KEGG" id="dvu:DVU_1825"/>
<dbReference type="PATRIC" id="fig|882.5.peg.1675"/>
<dbReference type="eggNOG" id="COG0402">
    <property type="taxonomic scope" value="Bacteria"/>
</dbReference>
<dbReference type="HOGENOM" id="CLU_012358_2_1_7"/>
<dbReference type="OrthoDB" id="9807210at2"/>
<dbReference type="PhylomeDB" id="Q72B14"/>
<dbReference type="Proteomes" id="UP000002194">
    <property type="component" value="Chromosome"/>
</dbReference>
<dbReference type="GO" id="GO:0090613">
    <property type="term" value="F:5'-deoxyadenosine deaminase activity"/>
    <property type="evidence" value="ECO:0000314"/>
    <property type="project" value="CACAO"/>
</dbReference>
<dbReference type="GO" id="GO:0090614">
    <property type="term" value="F:5'-methylthioadenosine deaminase activity"/>
    <property type="evidence" value="ECO:0007669"/>
    <property type="project" value="UniProtKB-UniRule"/>
</dbReference>
<dbReference type="GO" id="GO:0046872">
    <property type="term" value="F:metal ion binding"/>
    <property type="evidence" value="ECO:0007669"/>
    <property type="project" value="UniProtKB-KW"/>
</dbReference>
<dbReference type="GO" id="GO:0050270">
    <property type="term" value="F:S-adenosylhomocysteine deaminase activity"/>
    <property type="evidence" value="ECO:0007669"/>
    <property type="project" value="UniProtKB-UniRule"/>
</dbReference>
<dbReference type="CDD" id="cd01298">
    <property type="entry name" value="ATZ_TRZ_like"/>
    <property type="match status" value="1"/>
</dbReference>
<dbReference type="FunFam" id="3.20.20.140:FF:000014">
    <property type="entry name" value="5-methylthioadenosine/S-adenosylhomocysteine deaminase"/>
    <property type="match status" value="1"/>
</dbReference>
<dbReference type="Gene3D" id="3.20.20.140">
    <property type="entry name" value="Metal-dependent hydrolases"/>
    <property type="match status" value="1"/>
</dbReference>
<dbReference type="Gene3D" id="2.30.40.10">
    <property type="entry name" value="Urease, subunit C, domain 1"/>
    <property type="match status" value="1"/>
</dbReference>
<dbReference type="HAMAP" id="MF_01281">
    <property type="entry name" value="MTA_SAH_deamin"/>
    <property type="match status" value="1"/>
</dbReference>
<dbReference type="InterPro" id="IPR006680">
    <property type="entry name" value="Amidohydro-rel"/>
</dbReference>
<dbReference type="InterPro" id="IPR023512">
    <property type="entry name" value="Deaminase_MtaD/DadD"/>
</dbReference>
<dbReference type="InterPro" id="IPR011059">
    <property type="entry name" value="Metal-dep_hydrolase_composite"/>
</dbReference>
<dbReference type="InterPro" id="IPR032466">
    <property type="entry name" value="Metal_Hydrolase"/>
</dbReference>
<dbReference type="InterPro" id="IPR050287">
    <property type="entry name" value="MTA/SAH_deaminase"/>
</dbReference>
<dbReference type="PANTHER" id="PTHR43794:SF11">
    <property type="entry name" value="AMIDOHYDROLASE-RELATED DOMAIN-CONTAINING PROTEIN"/>
    <property type="match status" value="1"/>
</dbReference>
<dbReference type="PANTHER" id="PTHR43794">
    <property type="entry name" value="AMINOHYDROLASE SSNA-RELATED"/>
    <property type="match status" value="1"/>
</dbReference>
<dbReference type="Pfam" id="PF01979">
    <property type="entry name" value="Amidohydro_1"/>
    <property type="match status" value="1"/>
</dbReference>
<dbReference type="SUPFAM" id="SSF51338">
    <property type="entry name" value="Composite domain of metallo-dependent hydrolases"/>
    <property type="match status" value="1"/>
</dbReference>
<dbReference type="SUPFAM" id="SSF51556">
    <property type="entry name" value="Metallo-dependent hydrolases"/>
    <property type="match status" value="1"/>
</dbReference>
<feature type="chain" id="PRO_0000312454" description="5-methylthioadenosine/S-adenosylhomocysteine deaminase">
    <location>
        <begin position="1"/>
        <end position="442"/>
    </location>
</feature>
<feature type="binding site" evidence="1">
    <location>
        <position position="70"/>
    </location>
    <ligand>
        <name>Zn(2+)</name>
        <dbReference type="ChEBI" id="CHEBI:29105"/>
    </ligand>
</feature>
<feature type="binding site" evidence="1">
    <location>
        <position position="72"/>
    </location>
    <ligand>
        <name>Zn(2+)</name>
        <dbReference type="ChEBI" id="CHEBI:29105"/>
    </ligand>
</feature>
<feature type="binding site" evidence="1">
    <location>
        <position position="99"/>
    </location>
    <ligand>
        <name>substrate</name>
    </ligand>
</feature>
<feature type="binding site" evidence="1">
    <location>
        <position position="191"/>
    </location>
    <ligand>
        <name>substrate</name>
    </ligand>
</feature>
<feature type="binding site" evidence="1">
    <location>
        <position position="218"/>
    </location>
    <ligand>
        <name>Zn(2+)</name>
        <dbReference type="ChEBI" id="CHEBI:29105"/>
    </ligand>
</feature>
<feature type="binding site" evidence="1">
    <location>
        <position position="221"/>
    </location>
    <ligand>
        <name>substrate</name>
    </ligand>
</feature>
<feature type="binding site" evidence="1">
    <location>
        <position position="306"/>
    </location>
    <ligand>
        <name>substrate</name>
    </ligand>
</feature>
<feature type="binding site" evidence="1">
    <location>
        <position position="306"/>
    </location>
    <ligand>
        <name>Zn(2+)</name>
        <dbReference type="ChEBI" id="CHEBI:29105"/>
    </ligand>
</feature>
<proteinExistence type="inferred from homology"/>
<sequence length="442" mass="47285">MPLPCDTILQAALIVTQDDARTVIEDGAIAIHEGRIAAVGQRDAIVGNWHGVTVIDMGESLIMPGLVNAHTHASMTLLRGLADDLPLMDWLTGHIFPVEKGLTGELVELGALLGCAEMLRTGTTAFSDMYLIEDATLRAVDRAGLRCLAGEAIFAFPSPAYADPETAFDLVRAQHDRWKHHARAALAVAPHAVYTSTPAILARCRDLAEELGLPIHLHLAETATETAQCIEQHGARPVPYCDGLGLLTPRTTLAHCVDLTEGEIDLLAERGVTVAHCPESNMKLASGIAPATAMLGRGMTLGLGTDGAASNNSLNMFTEMTSCALLHKVHHMDPTCAPASAVLDMATRGGAHALHMQGIGRIEAGCPADIIALDLRAPNMQPIFNPASHLVYAATGHETRLTMVGGEVLYLDGCYTRFDMDDLLKEVRKARTWAMEQVRAAR</sequence>
<reference key="1">
    <citation type="journal article" date="2004" name="Nat. Biotechnol.">
        <title>The genome sequence of the anaerobic, sulfate-reducing bacterium Desulfovibrio vulgaris Hildenborough.</title>
        <authorList>
            <person name="Heidelberg J.F."/>
            <person name="Seshadri R."/>
            <person name="Haveman S.A."/>
            <person name="Hemme C.L."/>
            <person name="Paulsen I.T."/>
            <person name="Kolonay J.F."/>
            <person name="Eisen J.A."/>
            <person name="Ward N.L."/>
            <person name="Methe B.A."/>
            <person name="Brinkac L.M."/>
            <person name="Daugherty S.C."/>
            <person name="DeBoy R.T."/>
            <person name="Dodson R.J."/>
            <person name="Durkin A.S."/>
            <person name="Madupu R."/>
            <person name="Nelson W.C."/>
            <person name="Sullivan S.A."/>
            <person name="Fouts D.E."/>
            <person name="Haft D.H."/>
            <person name="Selengut J."/>
            <person name="Peterson J.D."/>
            <person name="Davidsen T.M."/>
            <person name="Zafar N."/>
            <person name="Zhou L."/>
            <person name="Radune D."/>
            <person name="Dimitrov G."/>
            <person name="Hance M."/>
            <person name="Tran K."/>
            <person name="Khouri H.M."/>
            <person name="Gill J."/>
            <person name="Utterback T.R."/>
            <person name="Feldblyum T.V."/>
            <person name="Wall J.D."/>
            <person name="Voordouw G."/>
            <person name="Fraser C.M."/>
        </authorList>
    </citation>
    <scope>NUCLEOTIDE SEQUENCE [LARGE SCALE GENOMIC DNA]</scope>
    <source>
        <strain>ATCC 29579 / DSM 644 / CCUG 34227 / NCIMB 8303 / VKM B-1760 / Hildenborough</strain>
    </source>
</reference>
<protein>
    <recommendedName>
        <fullName evidence="1">5-methylthioadenosine/S-adenosylhomocysteine deaminase</fullName>
        <shortName evidence="1">MTA/SAH deaminase</shortName>
        <ecNumber evidence="1">3.5.4.28</ecNumber>
        <ecNumber evidence="1">3.5.4.31</ecNumber>
    </recommendedName>
</protein>
<organism>
    <name type="scientific">Nitratidesulfovibrio vulgaris (strain ATCC 29579 / DSM 644 / CCUG 34227 / NCIMB 8303 / VKM B-1760 / Hildenborough)</name>
    <name type="common">Desulfovibrio vulgaris</name>
    <dbReference type="NCBI Taxonomy" id="882"/>
    <lineage>
        <taxon>Bacteria</taxon>
        <taxon>Pseudomonadati</taxon>
        <taxon>Thermodesulfobacteriota</taxon>
        <taxon>Desulfovibrionia</taxon>
        <taxon>Desulfovibrionales</taxon>
        <taxon>Desulfovibrionaceae</taxon>
        <taxon>Nitratidesulfovibrio</taxon>
    </lineage>
</organism>
<comment type="function">
    <text evidence="1">Catalyzes the deamination of 5-methylthioadenosine and S-adenosyl-L-homocysteine into 5-methylthioinosine and S-inosyl-L-homocysteine, respectively. Is also able to deaminate adenosine.</text>
</comment>
<comment type="catalytic activity">
    <reaction evidence="1">
        <text>S-adenosyl-L-homocysteine + H2O + H(+) = S-inosyl-L-homocysteine + NH4(+)</text>
        <dbReference type="Rhea" id="RHEA:20716"/>
        <dbReference type="ChEBI" id="CHEBI:15377"/>
        <dbReference type="ChEBI" id="CHEBI:15378"/>
        <dbReference type="ChEBI" id="CHEBI:28938"/>
        <dbReference type="ChEBI" id="CHEBI:57856"/>
        <dbReference type="ChEBI" id="CHEBI:57985"/>
        <dbReference type="EC" id="3.5.4.28"/>
    </reaction>
</comment>
<comment type="catalytic activity">
    <reaction evidence="1">
        <text>S-methyl-5'-thioadenosine + H2O + H(+) = S-methyl-5'-thioinosine + NH4(+)</text>
        <dbReference type="Rhea" id="RHEA:25025"/>
        <dbReference type="ChEBI" id="CHEBI:15377"/>
        <dbReference type="ChEBI" id="CHEBI:15378"/>
        <dbReference type="ChEBI" id="CHEBI:17509"/>
        <dbReference type="ChEBI" id="CHEBI:28938"/>
        <dbReference type="ChEBI" id="CHEBI:48595"/>
        <dbReference type="EC" id="3.5.4.31"/>
    </reaction>
</comment>
<comment type="cofactor">
    <cofactor evidence="1">
        <name>Zn(2+)</name>
        <dbReference type="ChEBI" id="CHEBI:29105"/>
    </cofactor>
    <text evidence="1">Binds 1 zinc ion per subunit.</text>
</comment>
<comment type="similarity">
    <text evidence="1">Belongs to the metallo-dependent hydrolases superfamily. MTA/SAH deaminase family.</text>
</comment>
<evidence type="ECO:0000255" key="1">
    <source>
        <dbReference type="HAMAP-Rule" id="MF_01281"/>
    </source>
</evidence>
<name>MTAD_NITV2</name>
<gene>
    <name evidence="1" type="primary">mtaD</name>
    <name type="ordered locus">DVU_1825</name>
</gene>